<comment type="function">
    <text evidence="1">Catalyzes the condensation of carbamoyl phosphate and aspartate to form carbamoyl aspartate and inorganic phosphate, the committed step in the de novo pyrimidine nucleotide biosynthesis pathway.</text>
</comment>
<comment type="catalytic activity">
    <reaction evidence="1">
        <text>carbamoyl phosphate + L-aspartate = N-carbamoyl-L-aspartate + phosphate + H(+)</text>
        <dbReference type="Rhea" id="RHEA:20013"/>
        <dbReference type="ChEBI" id="CHEBI:15378"/>
        <dbReference type="ChEBI" id="CHEBI:29991"/>
        <dbReference type="ChEBI" id="CHEBI:32814"/>
        <dbReference type="ChEBI" id="CHEBI:43474"/>
        <dbReference type="ChEBI" id="CHEBI:58228"/>
        <dbReference type="EC" id="2.1.3.2"/>
    </reaction>
</comment>
<comment type="pathway">
    <text evidence="1">Pyrimidine metabolism; UMP biosynthesis via de novo pathway; (S)-dihydroorotate from bicarbonate: step 2/3.</text>
</comment>
<comment type="subunit">
    <text evidence="1">Heterododecamer (2C3:3R2) of six catalytic PyrB chains organized as two trimers (C3), and six regulatory PyrI chains organized as three dimers (R2).</text>
</comment>
<comment type="similarity">
    <text evidence="1">Belongs to the aspartate/ornithine carbamoyltransferase superfamily. ATCase family.</text>
</comment>
<sequence>MVVTDGVVSLKHLVSMEILSNEEVLGLIKRGLAFKEKKVTFSLDRQYFAANLFFEASTRTHKSFEVAEKKLGLDVIEFDAKTSSVNKGETLYDTILTMSALGVDICVVRHSQDDYYKELIDSRTIQTSIVNGGDGSGQHPSQCLLDLMTIYDEFASFENLKIAIAGDITHSRVAKSNMQILKRLGAQIYFAGPKEWYSSEFDVYGKYVAIDDIINQIDVMMLLRVQHERHDGKESFSKKAYHQHYGLTEERYKQLKSSAIIMHPAPVNRDVEIADSLVEAPKSRIVAQMKNGVFVRMAILEAILRGKT</sequence>
<dbReference type="EC" id="2.1.3.2" evidence="1"/>
<dbReference type="EMBL" id="AE014133">
    <property type="protein sequence ID" value="AAN58574.1"/>
    <property type="molecule type" value="Genomic_DNA"/>
</dbReference>
<dbReference type="RefSeq" id="NP_721268.1">
    <property type="nucleotide sequence ID" value="NC_004350.2"/>
</dbReference>
<dbReference type="RefSeq" id="WP_002262007.1">
    <property type="nucleotide sequence ID" value="NC_004350.2"/>
</dbReference>
<dbReference type="SMR" id="Q8DUP5"/>
<dbReference type="STRING" id="210007.SMU_858"/>
<dbReference type="KEGG" id="smu:SMU_858"/>
<dbReference type="PATRIC" id="fig|210007.7.peg.765"/>
<dbReference type="eggNOG" id="COG0540">
    <property type="taxonomic scope" value="Bacteria"/>
</dbReference>
<dbReference type="HOGENOM" id="CLU_043846_2_1_9"/>
<dbReference type="OrthoDB" id="9774690at2"/>
<dbReference type="PhylomeDB" id="Q8DUP5"/>
<dbReference type="UniPathway" id="UPA00070">
    <property type="reaction ID" value="UER00116"/>
</dbReference>
<dbReference type="Proteomes" id="UP000002512">
    <property type="component" value="Chromosome"/>
</dbReference>
<dbReference type="GO" id="GO:0005829">
    <property type="term" value="C:cytosol"/>
    <property type="evidence" value="ECO:0007669"/>
    <property type="project" value="TreeGrafter"/>
</dbReference>
<dbReference type="GO" id="GO:0016597">
    <property type="term" value="F:amino acid binding"/>
    <property type="evidence" value="ECO:0007669"/>
    <property type="project" value="InterPro"/>
</dbReference>
<dbReference type="GO" id="GO:0004070">
    <property type="term" value="F:aspartate carbamoyltransferase activity"/>
    <property type="evidence" value="ECO:0007669"/>
    <property type="project" value="UniProtKB-UniRule"/>
</dbReference>
<dbReference type="GO" id="GO:0006207">
    <property type="term" value="P:'de novo' pyrimidine nucleobase biosynthetic process"/>
    <property type="evidence" value="ECO:0007669"/>
    <property type="project" value="InterPro"/>
</dbReference>
<dbReference type="GO" id="GO:0044205">
    <property type="term" value="P:'de novo' UMP biosynthetic process"/>
    <property type="evidence" value="ECO:0007669"/>
    <property type="project" value="UniProtKB-UniRule"/>
</dbReference>
<dbReference type="GO" id="GO:0006520">
    <property type="term" value="P:amino acid metabolic process"/>
    <property type="evidence" value="ECO:0007669"/>
    <property type="project" value="InterPro"/>
</dbReference>
<dbReference type="FunFam" id="3.40.50.1370:FF:000011">
    <property type="entry name" value="Aspartate carbamoyltransferase"/>
    <property type="match status" value="1"/>
</dbReference>
<dbReference type="Gene3D" id="3.40.50.1370">
    <property type="entry name" value="Aspartate/ornithine carbamoyltransferase"/>
    <property type="match status" value="2"/>
</dbReference>
<dbReference type="HAMAP" id="MF_00001">
    <property type="entry name" value="Asp_carb_tr"/>
    <property type="match status" value="1"/>
</dbReference>
<dbReference type="InterPro" id="IPR006132">
    <property type="entry name" value="Asp/Orn_carbamoyltranf_P-bd"/>
</dbReference>
<dbReference type="InterPro" id="IPR006130">
    <property type="entry name" value="Asp/Orn_carbamoylTrfase"/>
</dbReference>
<dbReference type="InterPro" id="IPR036901">
    <property type="entry name" value="Asp/Orn_carbamoylTrfase_sf"/>
</dbReference>
<dbReference type="InterPro" id="IPR002082">
    <property type="entry name" value="Asp_carbamoyltransf"/>
</dbReference>
<dbReference type="InterPro" id="IPR006131">
    <property type="entry name" value="Asp_carbamoyltransf_Asp/Orn-bd"/>
</dbReference>
<dbReference type="NCBIfam" id="TIGR00670">
    <property type="entry name" value="asp_carb_tr"/>
    <property type="match status" value="1"/>
</dbReference>
<dbReference type="NCBIfam" id="NF002032">
    <property type="entry name" value="PRK00856.1"/>
    <property type="match status" value="1"/>
</dbReference>
<dbReference type="PANTHER" id="PTHR45753:SF6">
    <property type="entry name" value="ASPARTATE CARBAMOYLTRANSFERASE"/>
    <property type="match status" value="1"/>
</dbReference>
<dbReference type="PANTHER" id="PTHR45753">
    <property type="entry name" value="ORNITHINE CARBAMOYLTRANSFERASE, MITOCHONDRIAL"/>
    <property type="match status" value="1"/>
</dbReference>
<dbReference type="Pfam" id="PF00185">
    <property type="entry name" value="OTCace"/>
    <property type="match status" value="1"/>
</dbReference>
<dbReference type="Pfam" id="PF02729">
    <property type="entry name" value="OTCace_N"/>
    <property type="match status" value="1"/>
</dbReference>
<dbReference type="PRINTS" id="PR00100">
    <property type="entry name" value="AOTCASE"/>
</dbReference>
<dbReference type="PRINTS" id="PR00101">
    <property type="entry name" value="ATCASE"/>
</dbReference>
<dbReference type="SUPFAM" id="SSF53671">
    <property type="entry name" value="Aspartate/ornithine carbamoyltransferase"/>
    <property type="match status" value="1"/>
</dbReference>
<dbReference type="PROSITE" id="PS00097">
    <property type="entry name" value="CARBAMOYLTRANSFERASE"/>
    <property type="match status" value="1"/>
</dbReference>
<accession>Q8DUP5</accession>
<name>PYRB_STRMU</name>
<reference key="1">
    <citation type="journal article" date="2002" name="Proc. Natl. Acad. Sci. U.S.A.">
        <title>Genome sequence of Streptococcus mutans UA159, a cariogenic dental pathogen.</title>
        <authorList>
            <person name="Ajdic D.J."/>
            <person name="McShan W.M."/>
            <person name="McLaughlin R.E."/>
            <person name="Savic G."/>
            <person name="Chang J."/>
            <person name="Carson M.B."/>
            <person name="Primeaux C."/>
            <person name="Tian R."/>
            <person name="Kenton S."/>
            <person name="Jia H.G."/>
            <person name="Lin S.P."/>
            <person name="Qian Y."/>
            <person name="Li S."/>
            <person name="Zhu H."/>
            <person name="Najar F.Z."/>
            <person name="Lai H."/>
            <person name="White J."/>
            <person name="Roe B.A."/>
            <person name="Ferretti J.J."/>
        </authorList>
    </citation>
    <scope>NUCLEOTIDE SEQUENCE [LARGE SCALE GENOMIC DNA]</scope>
    <source>
        <strain>ATCC 700610 / UA159</strain>
    </source>
</reference>
<evidence type="ECO:0000255" key="1">
    <source>
        <dbReference type="HAMAP-Rule" id="MF_00001"/>
    </source>
</evidence>
<feature type="chain" id="PRO_0000113205" description="Aspartate carbamoyltransferase catalytic subunit">
    <location>
        <begin position="1"/>
        <end position="308"/>
    </location>
</feature>
<feature type="binding site" evidence="1">
    <location>
        <position position="59"/>
    </location>
    <ligand>
        <name>carbamoyl phosphate</name>
        <dbReference type="ChEBI" id="CHEBI:58228"/>
    </ligand>
</feature>
<feature type="binding site" evidence="1">
    <location>
        <position position="60"/>
    </location>
    <ligand>
        <name>carbamoyl phosphate</name>
        <dbReference type="ChEBI" id="CHEBI:58228"/>
    </ligand>
</feature>
<feature type="binding site" evidence="1">
    <location>
        <position position="87"/>
    </location>
    <ligand>
        <name>L-aspartate</name>
        <dbReference type="ChEBI" id="CHEBI:29991"/>
    </ligand>
</feature>
<feature type="binding site" evidence="1">
    <location>
        <position position="109"/>
    </location>
    <ligand>
        <name>carbamoyl phosphate</name>
        <dbReference type="ChEBI" id="CHEBI:58228"/>
    </ligand>
</feature>
<feature type="binding site" evidence="1">
    <location>
        <position position="139"/>
    </location>
    <ligand>
        <name>carbamoyl phosphate</name>
        <dbReference type="ChEBI" id="CHEBI:58228"/>
    </ligand>
</feature>
<feature type="binding site" evidence="1">
    <location>
        <position position="142"/>
    </location>
    <ligand>
        <name>carbamoyl phosphate</name>
        <dbReference type="ChEBI" id="CHEBI:58228"/>
    </ligand>
</feature>
<feature type="binding site" evidence="1">
    <location>
        <position position="172"/>
    </location>
    <ligand>
        <name>L-aspartate</name>
        <dbReference type="ChEBI" id="CHEBI:29991"/>
    </ligand>
</feature>
<feature type="binding site" evidence="1">
    <location>
        <position position="224"/>
    </location>
    <ligand>
        <name>L-aspartate</name>
        <dbReference type="ChEBI" id="CHEBI:29991"/>
    </ligand>
</feature>
<feature type="binding site" evidence="1">
    <location>
        <position position="265"/>
    </location>
    <ligand>
        <name>carbamoyl phosphate</name>
        <dbReference type="ChEBI" id="CHEBI:58228"/>
    </ligand>
</feature>
<feature type="binding site" evidence="1">
    <location>
        <position position="266"/>
    </location>
    <ligand>
        <name>carbamoyl phosphate</name>
        <dbReference type="ChEBI" id="CHEBI:58228"/>
    </ligand>
</feature>
<proteinExistence type="inferred from homology"/>
<keyword id="KW-0665">Pyrimidine biosynthesis</keyword>
<keyword id="KW-1185">Reference proteome</keyword>
<keyword id="KW-0808">Transferase</keyword>
<gene>
    <name evidence="1" type="primary">pyrB</name>
    <name type="ordered locus">SMU_858</name>
</gene>
<protein>
    <recommendedName>
        <fullName evidence="1">Aspartate carbamoyltransferase catalytic subunit</fullName>
        <ecNumber evidence="1">2.1.3.2</ecNumber>
    </recommendedName>
    <alternativeName>
        <fullName evidence="1">Aspartate transcarbamylase</fullName>
        <shortName evidence="1">ATCase</shortName>
    </alternativeName>
</protein>
<organism>
    <name type="scientific">Streptococcus mutans serotype c (strain ATCC 700610 / UA159)</name>
    <dbReference type="NCBI Taxonomy" id="210007"/>
    <lineage>
        <taxon>Bacteria</taxon>
        <taxon>Bacillati</taxon>
        <taxon>Bacillota</taxon>
        <taxon>Bacilli</taxon>
        <taxon>Lactobacillales</taxon>
        <taxon>Streptococcaceae</taxon>
        <taxon>Streptococcus</taxon>
    </lineage>
</organism>